<accession>Q485R8</accession>
<organism>
    <name type="scientific">Colwellia psychrerythraea (strain 34H / ATCC BAA-681)</name>
    <name type="common">Vibrio psychroerythus</name>
    <dbReference type="NCBI Taxonomy" id="167879"/>
    <lineage>
        <taxon>Bacteria</taxon>
        <taxon>Pseudomonadati</taxon>
        <taxon>Pseudomonadota</taxon>
        <taxon>Gammaproteobacteria</taxon>
        <taxon>Alteromonadales</taxon>
        <taxon>Colwelliaceae</taxon>
        <taxon>Colwellia</taxon>
    </lineage>
</organism>
<proteinExistence type="evidence at protein level"/>
<reference key="1">
    <citation type="journal article" date="2005" name="Proc. Natl. Acad. Sci. U.S.A.">
        <title>The psychrophilic lifestyle as revealed by the genome sequence of Colwellia psychrerythraea 34H through genomic and proteomic analyses.</title>
        <authorList>
            <person name="Methe B.A."/>
            <person name="Nelson K.E."/>
            <person name="Deming J.W."/>
            <person name="Momen B."/>
            <person name="Melamud E."/>
            <person name="Zhang X."/>
            <person name="Moult J."/>
            <person name="Madupu R."/>
            <person name="Nelson W.C."/>
            <person name="Dodson R.J."/>
            <person name="Brinkac L.M."/>
            <person name="Daugherty S.C."/>
            <person name="Durkin A.S."/>
            <person name="DeBoy R.T."/>
            <person name="Kolonay J.F."/>
            <person name="Sullivan S.A."/>
            <person name="Zhou L."/>
            <person name="Davidsen T.M."/>
            <person name="Wu M."/>
            <person name="Huston A.L."/>
            <person name="Lewis M."/>
            <person name="Weaver B."/>
            <person name="Weidman J.F."/>
            <person name="Khouri H."/>
            <person name="Utterback T.R."/>
            <person name="Feldblyum T.V."/>
            <person name="Fraser C.M."/>
        </authorList>
    </citation>
    <scope>NUCLEOTIDE SEQUENCE [LARGE SCALE GENOMIC DNA]</scope>
    <source>
        <strain>34H / ATCC BAA-681</strain>
    </source>
</reference>
<reference key="2">
    <citation type="journal article" date="2014" name="FEBS Open Bio">
        <title>Identification and characterization of trans-3-hydroxy-L-proline dehydratase and Delta(1)-pyrroline-2-carboxylate reductase involved in trans-3-hydroxy-L-proline metabolism of bacteria.</title>
        <authorList>
            <person name="Watanabe S."/>
            <person name="Tanimoto Y."/>
            <person name="Yamauchi S."/>
            <person name="Tozawa Y."/>
            <person name="Sawayama S."/>
            <person name="Watanabe Y."/>
        </authorList>
    </citation>
    <scope>FUNCTION</scope>
    <scope>CATALYTIC ACTIVITY</scope>
    <scope>SUBUNIT</scope>
    <scope>BIOPHYSICOCHEMICAL PROPERTIES</scope>
    <source>
        <strain>34H / ATCC BAA-681</strain>
    </source>
</reference>
<reference key="3">
    <citation type="journal article" date="2014" name="Elife">
        <title>Prediction and characterization of enzymatic activities guided by sequence similarity and genome neighborhood networks.</title>
        <authorList>
            <person name="Zhao S."/>
            <person name="Sakai A."/>
            <person name="Zhang X."/>
            <person name="Vetting M.W."/>
            <person name="Kumar R."/>
            <person name="Hillerich B."/>
            <person name="San Francisco B."/>
            <person name="Solbiati J."/>
            <person name="Steves A."/>
            <person name="Brown S."/>
            <person name="Akiva E."/>
            <person name="Barber A."/>
            <person name="Seidel R.D."/>
            <person name="Babbitt P.C."/>
            <person name="Almo S.C."/>
            <person name="Gerlt J.A."/>
            <person name="Jacobson M.P."/>
        </authorList>
    </citation>
    <scope>FUNCTION</scope>
    <scope>CATALYTIC ACTIVITY</scope>
    <scope>BIOPHYSICOCHEMICAL PROPERTIES</scope>
</reference>
<dbReference type="EC" id="1.5.1.49" evidence="1 2"/>
<dbReference type="EMBL" id="CP000083">
    <property type="protein sequence ID" value="AAZ26871.1"/>
    <property type="molecule type" value="Genomic_DNA"/>
</dbReference>
<dbReference type="RefSeq" id="WP_011042291.1">
    <property type="nucleotide sequence ID" value="NC_003910.7"/>
</dbReference>
<dbReference type="SMR" id="Q485R8"/>
<dbReference type="STRING" id="167879.CPS_1455"/>
<dbReference type="DNASU" id="3521126"/>
<dbReference type="KEGG" id="cps:CPS_1455"/>
<dbReference type="eggNOG" id="COG2423">
    <property type="taxonomic scope" value="Bacteria"/>
</dbReference>
<dbReference type="HOGENOM" id="CLU_042088_1_2_6"/>
<dbReference type="BRENDA" id="1.5.1.1">
    <property type="organism ID" value="8143"/>
</dbReference>
<dbReference type="SABIO-RK" id="Q485R8"/>
<dbReference type="Proteomes" id="UP000000547">
    <property type="component" value="Chromosome"/>
</dbReference>
<dbReference type="GO" id="GO:0005737">
    <property type="term" value="C:cytoplasm"/>
    <property type="evidence" value="ECO:0007669"/>
    <property type="project" value="TreeGrafter"/>
</dbReference>
<dbReference type="GO" id="GO:0016491">
    <property type="term" value="F:oxidoreductase activity"/>
    <property type="evidence" value="ECO:0007669"/>
    <property type="project" value="UniProtKB-KW"/>
</dbReference>
<dbReference type="FunFam" id="3.40.50.720:FF:000311">
    <property type="entry name" value="Ornithine cyclodeaminase"/>
    <property type="match status" value="1"/>
</dbReference>
<dbReference type="Gene3D" id="3.40.50.720">
    <property type="entry name" value="NAD(P)-binding Rossmann-like Domain"/>
    <property type="match status" value="1"/>
</dbReference>
<dbReference type="Gene3D" id="3.30.1780.10">
    <property type="entry name" value="ornithine cyclodeaminase, domain 1"/>
    <property type="match status" value="1"/>
</dbReference>
<dbReference type="InterPro" id="IPR036291">
    <property type="entry name" value="NAD(P)-bd_dom_sf"/>
</dbReference>
<dbReference type="InterPro" id="IPR003462">
    <property type="entry name" value="ODC_Mu_crystall"/>
</dbReference>
<dbReference type="InterPro" id="IPR023401">
    <property type="entry name" value="ODC_N"/>
</dbReference>
<dbReference type="NCBIfam" id="NF004793">
    <property type="entry name" value="PRK06141.1"/>
    <property type="match status" value="1"/>
</dbReference>
<dbReference type="PANTHER" id="PTHR13812">
    <property type="entry name" value="KETIMINE REDUCTASE MU-CRYSTALLIN"/>
    <property type="match status" value="1"/>
</dbReference>
<dbReference type="PANTHER" id="PTHR13812:SF19">
    <property type="entry name" value="KETIMINE REDUCTASE MU-CRYSTALLIN"/>
    <property type="match status" value="1"/>
</dbReference>
<dbReference type="Pfam" id="PF02423">
    <property type="entry name" value="OCD_Mu_crystall"/>
    <property type="match status" value="1"/>
</dbReference>
<dbReference type="PIRSF" id="PIRSF001439">
    <property type="entry name" value="CryM"/>
    <property type="match status" value="1"/>
</dbReference>
<dbReference type="SUPFAM" id="SSF51735">
    <property type="entry name" value="NAD(P)-binding Rossmann-fold domains"/>
    <property type="match status" value="1"/>
</dbReference>
<keyword id="KW-0520">NAD</keyword>
<keyword id="KW-0521">NADP</keyword>
<keyword id="KW-0560">Oxidoreductase</keyword>
<name>PY2CR_COLP3</name>
<comment type="function">
    <text evidence="1 2">Catalyzes the reduction of Delta(1)-pyrroline-2-carboxylate (Pyr2C) to L-proline, using preferentially NADPH over NADH as the electron donor. Together with LhpH, is involved in a metabolic pathway that converts trans-3-hydroxy-L-proline (t3LHyp) to L-proline. To a much lesser extent, can also reduce Delta(1)-piperideine-2-carboxylate (Pip2C) to L-pipecolate in vitro; however, this activity has likely no physiological significance in vivo since C.psychrerythraea probably possesses no ability to metabolize D-lysine via the L-pipecolate pathway. Does not show ornithine cyclodeaminase (OCD) activity.</text>
</comment>
<comment type="catalytic activity">
    <reaction evidence="1 2">
        <text>L-proline + NAD(+) = 1-pyrroline-2-carboxylate + NADH + H(+)</text>
        <dbReference type="Rhea" id="RHEA:20321"/>
        <dbReference type="ChEBI" id="CHEBI:15378"/>
        <dbReference type="ChEBI" id="CHEBI:39785"/>
        <dbReference type="ChEBI" id="CHEBI:57540"/>
        <dbReference type="ChEBI" id="CHEBI:57945"/>
        <dbReference type="ChEBI" id="CHEBI:60039"/>
        <dbReference type="EC" id="1.5.1.49"/>
    </reaction>
</comment>
<comment type="catalytic activity">
    <reaction evidence="1 2">
        <text>L-proline + NADP(+) = 1-pyrroline-2-carboxylate + NADPH + H(+)</text>
        <dbReference type="Rhea" id="RHEA:20317"/>
        <dbReference type="ChEBI" id="CHEBI:15378"/>
        <dbReference type="ChEBI" id="CHEBI:39785"/>
        <dbReference type="ChEBI" id="CHEBI:57783"/>
        <dbReference type="ChEBI" id="CHEBI:58349"/>
        <dbReference type="ChEBI" id="CHEBI:60039"/>
        <dbReference type="EC" id="1.5.1.49"/>
    </reaction>
</comment>
<comment type="biophysicochemical properties">
    <kinetics>
        <KM evidence="1">5.9 mM for Delta(1)-pyrroline-2-carboxylate (using NADPH, at pH 6.5)</KM>
        <KM evidence="1">2.79 mM for Delta(1)-pyrroline-2-carboxylate (using NADH, at pH 6.5)</KM>
        <KM evidence="1">7.26 mM for Delta(1)-piperideine-2-carboxylate (using NADPH, at pH 6.5)</KM>
        <KM evidence="1">2.1 mM for Delta(1)-piperideine-2-carboxylate (using NADH, at pH 6.5)</KM>
        <KM evidence="1">8.28 mM for Delta(1)-pyrroline-(4S)-hydroxy-2-carboxylate (using NADPH, at pH 6.5)</KM>
        <KM evidence="1">18.3 mM for L-proline (using NADP(+), at pH 10.5)</KM>
        <KM evidence="1">18.8 mM for L-proline (using NAD(+), at pH 10.5)</KM>
        <KM evidence="1">80.1 mM for L-pipecolate (using NADP(+), at pH 10.5)</KM>
        <KM evidence="2">1.8 mM for Delta(1)-pyrroline-2-carboxylate (using NADPH as cosubstrate)</KM>
        <text evidence="1">kcat is 7470 min(-1) for Pyr2C reduction using NADPH. kcat is 621 min(-1) for Pyr2C reduction using NADH. kcat is 82.0 min(-1) for Pip2C reduction using NADPH. kcat is 5.27 min(-1) for Pip2C reduction using NADH. kcat is 61.3 min(-1) for Delta(1)-pyrroline-(4S)-hydroxy-2-carboxylate (Pyr4SH2C) reduction using NADPH. kcat is 65.3 min(-1) for L-proline oxidation using NADP(+). kcat is 0.415 min(-1) for L-proline oxidation using NAD(+). kcat is 1.28 min(-1) for L-pipecolate oxidation using NADP(+).</text>
    </kinetics>
    <phDependence>
        <text evidence="1">Optimum pH is 6.5 for Pyr2C reduction and 10.5 for L-proline oxidation.</text>
    </phDependence>
</comment>
<comment type="subunit">
    <text evidence="1">Homodimer.</text>
</comment>
<comment type="similarity">
    <text evidence="5">Belongs to the ornithine cyclodeaminase/mu-crystallin family.</text>
</comment>
<evidence type="ECO:0000269" key="1">
    <source>
    </source>
</evidence>
<evidence type="ECO:0000269" key="2">
    <source>
    </source>
</evidence>
<evidence type="ECO:0000303" key="3">
    <source>
    </source>
</evidence>
<evidence type="ECO:0000303" key="4">
    <source>
    </source>
</evidence>
<evidence type="ECO:0000305" key="5">
    <source>
    </source>
</evidence>
<evidence type="ECO:0000312" key="6">
    <source>
        <dbReference type="EMBL" id="AAZ26871.1"/>
    </source>
</evidence>
<protein>
    <recommendedName>
        <fullName evidence="3">Delta(1)-pyrroline-2-carboxylate reductase</fullName>
        <shortName evidence="3">Pyr2C reductase</shortName>
        <ecNumber evidence="1 2">1.5.1.49</ecNumber>
    </recommendedName>
    <alternativeName>
        <fullName evidence="4">Proline ketimine reductase</fullName>
    </alternativeName>
</protein>
<feature type="chain" id="PRO_0000432296" description="Delta(1)-pyrroline-2-carboxylate reductase">
    <location>
        <begin position="1"/>
        <end position="316"/>
    </location>
</feature>
<gene>
    <name evidence="3" type="primary">lhpI</name>
    <name evidence="6" type="ordered locus">CPS_1455</name>
</gene>
<sequence length="316" mass="34701">MKIISAEQVHQNLNFEELIPLLKQSFSRPFSMPQRQVYSLAPEQSENHDAFALLPSWNEEVIGNKAFTYFPDNAKKHDLPGLFSKIMLFKRQTGEPLALVDGTSVTYWRTAAISALASQLLSRKNSQHLMLFGTGNLASYLVKAHLTVRDIKQVTLWGRNAKKVSKLIADFSILYPAVTFKTSVDVNAEVASADIICCATGAKTPLFDGNSVSAGCHIDCLGNHMTDARECDTTTILRARVFVDSLTNTLNEAGELLIPMAEDAFNKDEIVGELADMCKTPSMLRQSSDEITLFKSVGTAISDLVAAHSVVEKLAD</sequence>